<reference evidence="5" key="1">
    <citation type="journal article" date="2003" name="Biochim. Biophys. Acta">
        <title>Lebecetin, a potent antiplatelet C-type lectin from Macrovipera lebetina venom.</title>
        <authorList>
            <person name="Sarray S."/>
            <person name="Srairi N."/>
            <person name="Hatmi M."/>
            <person name="Luis J."/>
            <person name="Louzir H."/>
            <person name="Regaya I."/>
            <person name="Slema H."/>
            <person name="Marvaldi J."/>
            <person name="El Ayeb M."/>
            <person name="Marrakchi N."/>
        </authorList>
    </citation>
    <scope>PROTEIN SEQUENCE</scope>
    <scope>FUNCTION</scope>
    <scope>COFACTOR</scope>
    <scope>SUBUNIT</scope>
    <scope>TISSUE SPECIFICITY</scope>
    <scope>SUBCELLULAR LOCATION</scope>
    <scope>GLYCOSYLATION</scope>
    <scope>MASS SPECTROMETRY</scope>
    <source>
        <tissue evidence="3">Venom</tissue>
    </source>
</reference>
<dbReference type="SMR" id="P84037"/>
<dbReference type="GO" id="GO:0005576">
    <property type="term" value="C:extracellular region"/>
    <property type="evidence" value="ECO:0007669"/>
    <property type="project" value="UniProtKB-SubCell"/>
</dbReference>
<dbReference type="GO" id="GO:0090729">
    <property type="term" value="F:toxin activity"/>
    <property type="evidence" value="ECO:0007669"/>
    <property type="project" value="UniProtKB-KW"/>
</dbReference>
<dbReference type="Gene3D" id="3.10.100.10">
    <property type="entry name" value="Mannose-Binding Protein A, subunit A"/>
    <property type="match status" value="1"/>
</dbReference>
<dbReference type="InterPro" id="IPR016186">
    <property type="entry name" value="C-type_lectin-like/link_sf"/>
</dbReference>
<dbReference type="InterPro" id="IPR016187">
    <property type="entry name" value="CTDL_fold"/>
</dbReference>
<dbReference type="SUPFAM" id="SSF56436">
    <property type="entry name" value="C-type lectin-like"/>
    <property type="match status" value="1"/>
</dbReference>
<keyword id="KW-0106">Calcium</keyword>
<keyword id="KW-1217">Cell adhesion impairing toxin</keyword>
<keyword id="KW-0903">Direct protein sequencing</keyword>
<keyword id="KW-1015">Disulfide bond</keyword>
<keyword id="KW-0325">Glycoprotein</keyword>
<keyword id="KW-1199">Hemostasis impairing toxin</keyword>
<keyword id="KW-1201">Platelet aggregation inhibiting toxin</keyword>
<keyword id="KW-0964">Secreted</keyword>
<keyword id="KW-0800">Toxin</keyword>
<feature type="chain" id="PRO_0000046704" description="Snaclec lebecetin subunit beta">
    <location>
        <begin position="1"/>
        <end position="43" status="greater than"/>
    </location>
</feature>
<feature type="domain" description="C-type lectin" evidence="1 2">
    <location>
        <begin position="1"/>
        <end position="43" status="greater than"/>
    </location>
</feature>
<feature type="disulfide bond" evidence="1 2">
    <location>
        <begin position="4"/>
        <end position="16"/>
    </location>
</feature>
<feature type="non-terminal residue" evidence="4">
    <location>
        <position position="43"/>
    </location>
</feature>
<proteinExistence type="evidence at protein level"/>
<evidence type="ECO:0000250" key="1">
    <source>
        <dbReference type="UniProtKB" id="P23807"/>
    </source>
</evidence>
<evidence type="ECO:0000255" key="2">
    <source>
        <dbReference type="PROSITE-ProRule" id="PRU00040"/>
    </source>
</evidence>
<evidence type="ECO:0000269" key="3">
    <source>
    </source>
</evidence>
<evidence type="ECO:0000303" key="4">
    <source>
    </source>
</evidence>
<evidence type="ECO:0000305" key="5"/>
<organism>
    <name type="scientific">Macrovipera lebetinus</name>
    <name type="common">Levantine viper</name>
    <name type="synonym">Vipera lebetina</name>
    <dbReference type="NCBI Taxonomy" id="3148341"/>
    <lineage>
        <taxon>Eukaryota</taxon>
        <taxon>Metazoa</taxon>
        <taxon>Chordata</taxon>
        <taxon>Craniata</taxon>
        <taxon>Vertebrata</taxon>
        <taxon>Euteleostomi</taxon>
        <taxon>Lepidosauria</taxon>
        <taxon>Squamata</taxon>
        <taxon>Bifurcata</taxon>
        <taxon>Unidentata</taxon>
        <taxon>Episquamata</taxon>
        <taxon>Toxicofera</taxon>
        <taxon>Serpentes</taxon>
        <taxon>Colubroidea</taxon>
        <taxon>Viperidae</taxon>
        <taxon>Viperinae</taxon>
        <taxon>Macrovipera</taxon>
    </lineage>
</organism>
<comment type="function">
    <text evidence="3">Binds to the platelet GPIb/IX/V receptor system and inhibits ristocetin-induced platelet aggregation in human platelet-rich plasma. Strongly inhibits platelet aggregation induced by ADP, calcium ionophore, thrombin and collagen. Does not inhibit U46619-induced platelet aggregation.</text>
</comment>
<comment type="cofactor">
    <cofactor evidence="3">
        <name>Ca(2+)</name>
        <dbReference type="ChEBI" id="CHEBI:29108"/>
    </cofactor>
</comment>
<comment type="subunit">
    <text evidence="3">Heterodimer of subunits alpha and beta; disulfide-linked.</text>
</comment>
<comment type="subcellular location">
    <subcellularLocation>
        <location evidence="3">Secreted</location>
    </subcellularLocation>
</comment>
<comment type="tissue specificity">
    <text evidence="3">Expressed by the venom gland.</text>
</comment>
<comment type="PTM">
    <text evidence="3">Glycosylated.</text>
</comment>
<comment type="mass spectrometry"/>
<comment type="similarity">
    <text evidence="5">Belongs to the snaclec family.</text>
</comment>
<sequence>ALNCASGWSGGYDQHCYKVFDIPPSWAADEKFCKQQTSGGHLV</sequence>
<name>SLB_MACLB</name>
<accession>P84037</accession>
<protein>
    <recommendedName>
        <fullName>Snaclec lebecetin subunit beta</fullName>
    </recommendedName>
</protein>